<proteinExistence type="inferred from homology"/>
<accession>D3E0R7</accession>
<dbReference type="EC" id="6.2.1.14" evidence="1"/>
<dbReference type="EMBL" id="CP001719">
    <property type="protein sequence ID" value="ADC47891.1"/>
    <property type="molecule type" value="Genomic_DNA"/>
</dbReference>
<dbReference type="SMR" id="D3E0R7"/>
<dbReference type="STRING" id="634498.mru_2041"/>
<dbReference type="KEGG" id="mru:mru_2041"/>
<dbReference type="PATRIC" id="fig|634498.28.peg.2042"/>
<dbReference type="eggNOG" id="arCOG05075">
    <property type="taxonomic scope" value="Archaea"/>
</dbReference>
<dbReference type="HOGENOM" id="CLU_076858_0_0_2"/>
<dbReference type="UniPathway" id="UPA00999">
    <property type="reaction ID" value="UER00351"/>
</dbReference>
<dbReference type="Proteomes" id="UP000008680">
    <property type="component" value="Chromosome"/>
</dbReference>
<dbReference type="GO" id="GO:0042410">
    <property type="term" value="F:6-carboxyhexanoate-CoA ligase activity"/>
    <property type="evidence" value="ECO:0007669"/>
    <property type="project" value="UniProtKB-UniRule"/>
</dbReference>
<dbReference type="GO" id="GO:0005524">
    <property type="term" value="F:ATP binding"/>
    <property type="evidence" value="ECO:0007669"/>
    <property type="project" value="UniProtKB-KW"/>
</dbReference>
<dbReference type="GO" id="GO:0000287">
    <property type="term" value="F:magnesium ion binding"/>
    <property type="evidence" value="ECO:0007669"/>
    <property type="project" value="UniProtKB-UniRule"/>
</dbReference>
<dbReference type="GO" id="GO:0009102">
    <property type="term" value="P:biotin biosynthetic process"/>
    <property type="evidence" value="ECO:0007669"/>
    <property type="project" value="UniProtKB-UniRule"/>
</dbReference>
<dbReference type="HAMAP" id="MF_00668">
    <property type="entry name" value="BioW"/>
    <property type="match status" value="1"/>
</dbReference>
<dbReference type="InterPro" id="IPR005499">
    <property type="entry name" value="BioW"/>
</dbReference>
<dbReference type="NCBIfam" id="TIGR01204">
    <property type="entry name" value="bioW"/>
    <property type="match status" value="1"/>
</dbReference>
<dbReference type="NCBIfam" id="NF002360">
    <property type="entry name" value="PRK01322.1"/>
    <property type="match status" value="1"/>
</dbReference>
<dbReference type="Pfam" id="PF03744">
    <property type="entry name" value="BioW"/>
    <property type="match status" value="1"/>
</dbReference>
<keyword id="KW-0067">ATP-binding</keyword>
<keyword id="KW-0093">Biotin biosynthesis</keyword>
<keyword id="KW-0436">Ligase</keyword>
<keyword id="KW-0460">Magnesium</keyword>
<keyword id="KW-0547">Nucleotide-binding</keyword>
<gene>
    <name evidence="1" type="primary">bioW</name>
    <name type="ordered locus">mru_2041</name>
</gene>
<sequence length="256" mass="28860">MKLMMYSIKMRSAKGGPHEEGGKHISGAERILREDEIEEELINVYRRAITHEKGKPDFINLKIEAIDEDKILYKKRLNIIQHKVSSKEEGLKLAKELLIKNTVSEEAAKEGISSIQKLKESIHGAMLLDKDSGKRIDDKGIKGVRVTGIASADIKKYKESLKRDGREGLHLEEALILASKIASCKAIVAELCWSDDPSYVIGYVGTKENYHRIPILKDKGNPVGGRVFFVDTSQLNDNYTLEDLIDYLEKQIVLIE</sequence>
<evidence type="ECO:0000255" key="1">
    <source>
        <dbReference type="HAMAP-Rule" id="MF_00668"/>
    </source>
</evidence>
<name>BIOW_METRM</name>
<feature type="chain" id="PRO_0000412094" description="6-carboxyhexanoate--CoA ligase">
    <location>
        <begin position="1"/>
        <end position="256"/>
    </location>
</feature>
<reference key="1">
    <citation type="journal article" date="2010" name="PLoS ONE">
        <title>The genome sequence of the rumen methanogen Methanobrevibacter ruminantium reveals new possibilities for controlling ruminant methane emissions.</title>
        <authorList>
            <person name="Leahy S.C."/>
            <person name="Kelly W.J."/>
            <person name="Altermann E."/>
            <person name="Ronimus R.S."/>
            <person name="Yeoman C.J."/>
            <person name="Pacheco D.M."/>
            <person name="Li D."/>
            <person name="Kong Z."/>
            <person name="McTavish S."/>
            <person name="Sang C."/>
            <person name="Lambie S.C."/>
            <person name="Janssen P.H."/>
            <person name="Dey D."/>
            <person name="Attwood G.T."/>
        </authorList>
    </citation>
    <scope>NUCLEOTIDE SEQUENCE [LARGE SCALE GENOMIC DNA]</scope>
    <source>
        <strain>ATCC 35063 / DSM 1093 / JCM 13430 / OCM 146 / M1</strain>
    </source>
</reference>
<comment type="function">
    <text evidence="1">Catalyzes the transformation of pimelate into pimeloyl-CoA with concomitant hydrolysis of ATP to AMP.</text>
</comment>
<comment type="catalytic activity">
    <reaction evidence="1">
        <text>heptanedioate + ATP + CoA = 6-carboxyhexanoyl-CoA + AMP + diphosphate</text>
        <dbReference type="Rhea" id="RHEA:14781"/>
        <dbReference type="ChEBI" id="CHEBI:30616"/>
        <dbReference type="ChEBI" id="CHEBI:33019"/>
        <dbReference type="ChEBI" id="CHEBI:36165"/>
        <dbReference type="ChEBI" id="CHEBI:57287"/>
        <dbReference type="ChEBI" id="CHEBI:57360"/>
        <dbReference type="ChEBI" id="CHEBI:456215"/>
        <dbReference type="EC" id="6.2.1.14"/>
    </reaction>
</comment>
<comment type="cofactor">
    <cofactor evidence="1">
        <name>Mg(2+)</name>
        <dbReference type="ChEBI" id="CHEBI:18420"/>
    </cofactor>
</comment>
<comment type="pathway">
    <text evidence="1">Metabolic intermediate metabolism; pimeloyl-CoA biosynthesis; pimeloyl-CoA from pimelate: step 1/1.</text>
</comment>
<comment type="subunit">
    <text evidence="1">Homodimer.</text>
</comment>
<comment type="similarity">
    <text evidence="1">Belongs to the BioW family.</text>
</comment>
<protein>
    <recommendedName>
        <fullName evidence="1">6-carboxyhexanoate--CoA ligase</fullName>
        <ecNumber evidence="1">6.2.1.14</ecNumber>
    </recommendedName>
    <alternativeName>
        <fullName evidence="1">Pimeloyl-CoA synthase</fullName>
    </alternativeName>
</protein>
<organism>
    <name type="scientific">Methanobrevibacter ruminantium (strain ATCC 35063 / DSM 1093 / JCM 13430 / OCM 146 / M1)</name>
    <name type="common">Methanobacterium ruminantium</name>
    <dbReference type="NCBI Taxonomy" id="634498"/>
    <lineage>
        <taxon>Archaea</taxon>
        <taxon>Methanobacteriati</taxon>
        <taxon>Methanobacteriota</taxon>
        <taxon>Methanomada group</taxon>
        <taxon>Methanobacteria</taxon>
        <taxon>Methanobacteriales</taxon>
        <taxon>Methanobacteriaceae</taxon>
        <taxon>Methanobrevibacter</taxon>
    </lineage>
</organism>